<feature type="chain" id="PRO_1000051764" description="Nucleotide-binding protein YPDSF_2805">
    <location>
        <begin position="1"/>
        <end position="163"/>
    </location>
</feature>
<protein>
    <recommendedName>
        <fullName evidence="1">Nucleotide-binding protein YPDSF_2805</fullName>
    </recommendedName>
</protein>
<dbReference type="EMBL" id="CP000668">
    <property type="protein sequence ID" value="ABP41167.1"/>
    <property type="molecule type" value="Genomic_DNA"/>
</dbReference>
<dbReference type="RefSeq" id="WP_002208655.1">
    <property type="nucleotide sequence ID" value="NZ_CP009715.1"/>
</dbReference>
<dbReference type="SMR" id="A4TPF5"/>
<dbReference type="KEGG" id="ypp:YPDSF_2805"/>
<dbReference type="PATRIC" id="fig|386656.14.peg.63"/>
<dbReference type="GO" id="GO:0005829">
    <property type="term" value="C:cytosol"/>
    <property type="evidence" value="ECO:0007669"/>
    <property type="project" value="TreeGrafter"/>
</dbReference>
<dbReference type="GO" id="GO:0000166">
    <property type="term" value="F:nucleotide binding"/>
    <property type="evidence" value="ECO:0007669"/>
    <property type="project" value="TreeGrafter"/>
</dbReference>
<dbReference type="CDD" id="cd11740">
    <property type="entry name" value="YajQ_like"/>
    <property type="match status" value="1"/>
</dbReference>
<dbReference type="FunFam" id="3.30.70.860:FF:000001">
    <property type="entry name" value="UPF0234 protein YajQ"/>
    <property type="match status" value="1"/>
</dbReference>
<dbReference type="FunFam" id="3.30.70.990:FF:000001">
    <property type="entry name" value="UPF0234 protein YajQ"/>
    <property type="match status" value="1"/>
</dbReference>
<dbReference type="Gene3D" id="3.30.70.860">
    <property type="match status" value="1"/>
</dbReference>
<dbReference type="Gene3D" id="3.30.70.990">
    <property type="entry name" value="YajQ-like, domain 2"/>
    <property type="match status" value="1"/>
</dbReference>
<dbReference type="HAMAP" id="MF_00632">
    <property type="entry name" value="YajQ"/>
    <property type="match status" value="1"/>
</dbReference>
<dbReference type="InterPro" id="IPR007551">
    <property type="entry name" value="DUF520"/>
</dbReference>
<dbReference type="InterPro" id="IPR035571">
    <property type="entry name" value="UPF0234-like_C"/>
</dbReference>
<dbReference type="InterPro" id="IPR035570">
    <property type="entry name" value="UPF0234_N"/>
</dbReference>
<dbReference type="InterPro" id="IPR036183">
    <property type="entry name" value="YajQ-like_sf"/>
</dbReference>
<dbReference type="NCBIfam" id="NF003819">
    <property type="entry name" value="PRK05412.1"/>
    <property type="match status" value="1"/>
</dbReference>
<dbReference type="PANTHER" id="PTHR30476">
    <property type="entry name" value="UPF0234 PROTEIN YAJQ"/>
    <property type="match status" value="1"/>
</dbReference>
<dbReference type="PANTHER" id="PTHR30476:SF0">
    <property type="entry name" value="UPF0234 PROTEIN YAJQ"/>
    <property type="match status" value="1"/>
</dbReference>
<dbReference type="Pfam" id="PF04461">
    <property type="entry name" value="DUF520"/>
    <property type="match status" value="1"/>
</dbReference>
<dbReference type="SUPFAM" id="SSF89963">
    <property type="entry name" value="YajQ-like"/>
    <property type="match status" value="2"/>
</dbReference>
<gene>
    <name type="ordered locus">YPDSF_2805</name>
</gene>
<proteinExistence type="inferred from homology"/>
<sequence length="163" mass="18350">MPSFDIVSEIDMQEVRNAVENATRDLANRWDFRNVPASFELNEKNESIKVVSESDFQVEQLLDILRAQLSKRGIEGAALEIPEEMARSGKTYSVDAKLKQGIESVQAKKLVKLIKDSKLKVQAQIQGEQVRVTGKARDDLQAVMALVRAADLGQPFQFNNFRD</sequence>
<organism>
    <name type="scientific">Yersinia pestis (strain Pestoides F)</name>
    <dbReference type="NCBI Taxonomy" id="386656"/>
    <lineage>
        <taxon>Bacteria</taxon>
        <taxon>Pseudomonadati</taxon>
        <taxon>Pseudomonadota</taxon>
        <taxon>Gammaproteobacteria</taxon>
        <taxon>Enterobacterales</taxon>
        <taxon>Yersiniaceae</taxon>
        <taxon>Yersinia</taxon>
    </lineage>
</organism>
<evidence type="ECO:0000255" key="1">
    <source>
        <dbReference type="HAMAP-Rule" id="MF_00632"/>
    </source>
</evidence>
<reference key="1">
    <citation type="submission" date="2007-02" db="EMBL/GenBank/DDBJ databases">
        <title>Complete sequence of chromosome of Yersinia pestis Pestoides F.</title>
        <authorList>
            <consortium name="US DOE Joint Genome Institute"/>
            <person name="Copeland A."/>
            <person name="Lucas S."/>
            <person name="Lapidus A."/>
            <person name="Barry K."/>
            <person name="Detter J.C."/>
            <person name="Glavina del Rio T."/>
            <person name="Hammon N."/>
            <person name="Israni S."/>
            <person name="Dalin E."/>
            <person name="Tice H."/>
            <person name="Pitluck S."/>
            <person name="Di Bartolo G."/>
            <person name="Chain P."/>
            <person name="Malfatti S."/>
            <person name="Shin M."/>
            <person name="Vergez L."/>
            <person name="Schmutz J."/>
            <person name="Larimer F."/>
            <person name="Land M."/>
            <person name="Hauser L."/>
            <person name="Worsham P."/>
            <person name="Chu M."/>
            <person name="Bearden S."/>
            <person name="Garcia E."/>
            <person name="Richardson P."/>
        </authorList>
    </citation>
    <scope>NUCLEOTIDE SEQUENCE [LARGE SCALE GENOMIC DNA]</scope>
    <source>
        <strain>Pestoides F</strain>
    </source>
</reference>
<accession>A4TPF5</accession>
<name>Y2805_YERPP</name>
<comment type="function">
    <text evidence="1">Nucleotide-binding protein.</text>
</comment>
<comment type="similarity">
    <text evidence="1">Belongs to the YajQ family.</text>
</comment>
<keyword id="KW-0547">Nucleotide-binding</keyword>